<feature type="chain" id="PRO_0000225214" description="Elongation factor G">
    <location>
        <begin position="1"/>
        <end position="700"/>
    </location>
</feature>
<feature type="domain" description="tr-type G">
    <location>
        <begin position="8"/>
        <end position="290"/>
    </location>
</feature>
<feature type="binding site" evidence="1">
    <location>
        <begin position="17"/>
        <end position="24"/>
    </location>
    <ligand>
        <name>GTP</name>
        <dbReference type="ChEBI" id="CHEBI:37565"/>
    </ligand>
</feature>
<feature type="binding site" evidence="1">
    <location>
        <begin position="88"/>
        <end position="92"/>
    </location>
    <ligand>
        <name>GTP</name>
        <dbReference type="ChEBI" id="CHEBI:37565"/>
    </ligand>
</feature>
<feature type="binding site" evidence="1">
    <location>
        <begin position="142"/>
        <end position="145"/>
    </location>
    <ligand>
        <name>GTP</name>
        <dbReference type="ChEBI" id="CHEBI:37565"/>
    </ligand>
</feature>
<organism>
    <name type="scientific">Haemophilus influenzae (strain 86-028NP)</name>
    <dbReference type="NCBI Taxonomy" id="281310"/>
    <lineage>
        <taxon>Bacteria</taxon>
        <taxon>Pseudomonadati</taxon>
        <taxon>Pseudomonadota</taxon>
        <taxon>Gammaproteobacteria</taxon>
        <taxon>Pasteurellales</taxon>
        <taxon>Pasteurellaceae</taxon>
        <taxon>Haemophilus</taxon>
    </lineage>
</organism>
<comment type="function">
    <text evidence="1">Catalyzes the GTP-dependent ribosomal translocation step during translation elongation. During this step, the ribosome changes from the pre-translocational (PRE) to the post-translocational (POST) state as the newly formed A-site-bound peptidyl-tRNA and P-site-bound deacylated tRNA move to the P and E sites, respectively. Catalyzes the coordinated movement of the two tRNA molecules, the mRNA and conformational changes in the ribosome.</text>
</comment>
<comment type="subcellular location">
    <subcellularLocation>
        <location evidence="1">Cytoplasm</location>
    </subcellularLocation>
</comment>
<comment type="similarity">
    <text evidence="1">Belongs to the TRAFAC class translation factor GTPase superfamily. Classic translation factor GTPase family. EF-G/EF-2 subfamily.</text>
</comment>
<evidence type="ECO:0000255" key="1">
    <source>
        <dbReference type="HAMAP-Rule" id="MF_00054"/>
    </source>
</evidence>
<proteinExistence type="inferred from homology"/>
<sequence length="700" mass="77230">MARTTPIERYRNIGISAHIDAGKTTTTERILFYTGVSHKIGEVHDGAATMDWMEQEQERGITITSAATTAFWSGMSQQFPQHRINVIDTPGHVDFTVEVERSMRVLDGAVMVYCAVGGVQPQSETVWRQANKYEVPRIAFVNKMDRTGANFLRVVEQLKTRLGANAVPLQLPIGAEENFTGVVDLIKMKAINWNEADQGMTFTYEEVPANMQADCEEWRQNLVEAAAEASEELMEKYLGGEDLTEEEIKSALRQRVLANEIILVTCGSAFKNKGVQAMLDAVVEYLPAPTDIPAIKGINPDETEGERHASDEEPFSSLAFKIATDPFVGNLTFFRVYSGVINSGDTVLNSVRQKRERFGRIVQMHANKREEIKEVRAGDIAAAIGLKDVTTGDTLCAIEAPIILERMEFPEPVISVAVEPKTKADQEKMGLALGRLAQEDPSFRVHTDEESGETIISGMGELHLDIIVDRMKREFKVEANIGKPQVSYRETIRTRVNDVEGKHAKQSGGRGQYGHVVIDLYPLDPEGPGYEFVNEIKGGVIPGEYIPAVDKGIQEQLKSGPLAGYPVVDLGVRLHFGSYHDVDSSELAFKLAASLAFKAAFSKANPVLLEPIMKVEVETPPEYVGDVIGDLSRRRAMVNGQEANEFVVKIDAEVPLSEMFGYATDLRSQTQGRASYSMEPLKYAEAPTSVAAAVIEARKK</sequence>
<gene>
    <name evidence="1" type="primary">fusA</name>
    <name type="ordered locus">NTHI0747</name>
</gene>
<accession>Q4QMT6</accession>
<name>EFG_HAEI8</name>
<keyword id="KW-0963">Cytoplasm</keyword>
<keyword id="KW-0251">Elongation factor</keyword>
<keyword id="KW-0342">GTP-binding</keyword>
<keyword id="KW-0547">Nucleotide-binding</keyword>
<keyword id="KW-0648">Protein biosynthesis</keyword>
<protein>
    <recommendedName>
        <fullName evidence="1">Elongation factor G</fullName>
        <shortName evidence="1">EF-G</shortName>
    </recommendedName>
</protein>
<dbReference type="EMBL" id="CP000057">
    <property type="protein sequence ID" value="AAX87661.1"/>
    <property type="molecule type" value="Genomic_DNA"/>
</dbReference>
<dbReference type="RefSeq" id="WP_011272131.1">
    <property type="nucleotide sequence ID" value="NC_007146.2"/>
</dbReference>
<dbReference type="SMR" id="Q4QMT6"/>
<dbReference type="KEGG" id="hit:NTHI0747"/>
<dbReference type="HOGENOM" id="CLU_002794_4_1_6"/>
<dbReference type="Proteomes" id="UP000002525">
    <property type="component" value="Chromosome"/>
</dbReference>
<dbReference type="GO" id="GO:0005737">
    <property type="term" value="C:cytoplasm"/>
    <property type="evidence" value="ECO:0007669"/>
    <property type="project" value="UniProtKB-SubCell"/>
</dbReference>
<dbReference type="GO" id="GO:0005525">
    <property type="term" value="F:GTP binding"/>
    <property type="evidence" value="ECO:0007669"/>
    <property type="project" value="UniProtKB-UniRule"/>
</dbReference>
<dbReference type="GO" id="GO:0003924">
    <property type="term" value="F:GTPase activity"/>
    <property type="evidence" value="ECO:0007669"/>
    <property type="project" value="InterPro"/>
</dbReference>
<dbReference type="GO" id="GO:0097216">
    <property type="term" value="F:guanosine tetraphosphate binding"/>
    <property type="evidence" value="ECO:0007669"/>
    <property type="project" value="UniProtKB-ARBA"/>
</dbReference>
<dbReference type="GO" id="GO:0003746">
    <property type="term" value="F:translation elongation factor activity"/>
    <property type="evidence" value="ECO:0007669"/>
    <property type="project" value="UniProtKB-UniRule"/>
</dbReference>
<dbReference type="GO" id="GO:0032790">
    <property type="term" value="P:ribosome disassembly"/>
    <property type="evidence" value="ECO:0007669"/>
    <property type="project" value="TreeGrafter"/>
</dbReference>
<dbReference type="CDD" id="cd01886">
    <property type="entry name" value="EF-G"/>
    <property type="match status" value="1"/>
</dbReference>
<dbReference type="CDD" id="cd16262">
    <property type="entry name" value="EFG_III"/>
    <property type="match status" value="1"/>
</dbReference>
<dbReference type="CDD" id="cd01434">
    <property type="entry name" value="EFG_mtEFG1_IV"/>
    <property type="match status" value="1"/>
</dbReference>
<dbReference type="CDD" id="cd03713">
    <property type="entry name" value="EFG_mtEFG_C"/>
    <property type="match status" value="1"/>
</dbReference>
<dbReference type="CDD" id="cd04088">
    <property type="entry name" value="EFG_mtEFG_II"/>
    <property type="match status" value="1"/>
</dbReference>
<dbReference type="FunFam" id="2.40.30.10:FF:000006">
    <property type="entry name" value="Elongation factor G"/>
    <property type="match status" value="1"/>
</dbReference>
<dbReference type="FunFam" id="3.30.230.10:FF:000003">
    <property type="entry name" value="Elongation factor G"/>
    <property type="match status" value="1"/>
</dbReference>
<dbReference type="FunFam" id="3.30.70.240:FF:000001">
    <property type="entry name" value="Elongation factor G"/>
    <property type="match status" value="1"/>
</dbReference>
<dbReference type="FunFam" id="3.30.70.870:FF:000001">
    <property type="entry name" value="Elongation factor G"/>
    <property type="match status" value="1"/>
</dbReference>
<dbReference type="FunFam" id="3.40.50.300:FF:000029">
    <property type="entry name" value="Elongation factor G"/>
    <property type="match status" value="1"/>
</dbReference>
<dbReference type="Gene3D" id="3.30.230.10">
    <property type="match status" value="1"/>
</dbReference>
<dbReference type="Gene3D" id="3.30.70.240">
    <property type="match status" value="1"/>
</dbReference>
<dbReference type="Gene3D" id="3.30.70.870">
    <property type="entry name" value="Elongation Factor G (Translational Gtpase), domain 3"/>
    <property type="match status" value="1"/>
</dbReference>
<dbReference type="Gene3D" id="3.40.50.300">
    <property type="entry name" value="P-loop containing nucleotide triphosphate hydrolases"/>
    <property type="match status" value="1"/>
</dbReference>
<dbReference type="Gene3D" id="2.40.30.10">
    <property type="entry name" value="Translation factors"/>
    <property type="match status" value="1"/>
</dbReference>
<dbReference type="HAMAP" id="MF_00054_B">
    <property type="entry name" value="EF_G_EF_2_B"/>
    <property type="match status" value="1"/>
</dbReference>
<dbReference type="InterPro" id="IPR041095">
    <property type="entry name" value="EFG_II"/>
</dbReference>
<dbReference type="InterPro" id="IPR009022">
    <property type="entry name" value="EFG_III"/>
</dbReference>
<dbReference type="InterPro" id="IPR035647">
    <property type="entry name" value="EFG_III/V"/>
</dbReference>
<dbReference type="InterPro" id="IPR047872">
    <property type="entry name" value="EFG_IV"/>
</dbReference>
<dbReference type="InterPro" id="IPR035649">
    <property type="entry name" value="EFG_V"/>
</dbReference>
<dbReference type="InterPro" id="IPR000640">
    <property type="entry name" value="EFG_V-like"/>
</dbReference>
<dbReference type="InterPro" id="IPR004161">
    <property type="entry name" value="EFTu-like_2"/>
</dbReference>
<dbReference type="InterPro" id="IPR031157">
    <property type="entry name" value="G_TR_CS"/>
</dbReference>
<dbReference type="InterPro" id="IPR027417">
    <property type="entry name" value="P-loop_NTPase"/>
</dbReference>
<dbReference type="InterPro" id="IPR020568">
    <property type="entry name" value="Ribosomal_Su5_D2-typ_SF"/>
</dbReference>
<dbReference type="InterPro" id="IPR014721">
    <property type="entry name" value="Ribsml_uS5_D2-typ_fold_subgr"/>
</dbReference>
<dbReference type="InterPro" id="IPR005225">
    <property type="entry name" value="Small_GTP-bd"/>
</dbReference>
<dbReference type="InterPro" id="IPR000795">
    <property type="entry name" value="T_Tr_GTP-bd_dom"/>
</dbReference>
<dbReference type="InterPro" id="IPR009000">
    <property type="entry name" value="Transl_B-barrel_sf"/>
</dbReference>
<dbReference type="InterPro" id="IPR004540">
    <property type="entry name" value="Transl_elong_EFG/EF2"/>
</dbReference>
<dbReference type="InterPro" id="IPR005517">
    <property type="entry name" value="Transl_elong_EFG/EF2_IV"/>
</dbReference>
<dbReference type="NCBIfam" id="TIGR00484">
    <property type="entry name" value="EF-G"/>
    <property type="match status" value="1"/>
</dbReference>
<dbReference type="NCBIfam" id="NF009381">
    <property type="entry name" value="PRK12740.1-5"/>
    <property type="match status" value="1"/>
</dbReference>
<dbReference type="NCBIfam" id="TIGR00231">
    <property type="entry name" value="small_GTP"/>
    <property type="match status" value="1"/>
</dbReference>
<dbReference type="PANTHER" id="PTHR43261:SF1">
    <property type="entry name" value="RIBOSOME-RELEASING FACTOR 2, MITOCHONDRIAL"/>
    <property type="match status" value="1"/>
</dbReference>
<dbReference type="PANTHER" id="PTHR43261">
    <property type="entry name" value="TRANSLATION ELONGATION FACTOR G-RELATED"/>
    <property type="match status" value="1"/>
</dbReference>
<dbReference type="Pfam" id="PF00679">
    <property type="entry name" value="EFG_C"/>
    <property type="match status" value="1"/>
</dbReference>
<dbReference type="Pfam" id="PF14492">
    <property type="entry name" value="EFG_III"/>
    <property type="match status" value="1"/>
</dbReference>
<dbReference type="Pfam" id="PF03764">
    <property type="entry name" value="EFG_IV"/>
    <property type="match status" value="1"/>
</dbReference>
<dbReference type="Pfam" id="PF00009">
    <property type="entry name" value="GTP_EFTU"/>
    <property type="match status" value="1"/>
</dbReference>
<dbReference type="Pfam" id="PF03144">
    <property type="entry name" value="GTP_EFTU_D2"/>
    <property type="match status" value="1"/>
</dbReference>
<dbReference type="PRINTS" id="PR00315">
    <property type="entry name" value="ELONGATNFCT"/>
</dbReference>
<dbReference type="SMART" id="SM00838">
    <property type="entry name" value="EFG_C"/>
    <property type="match status" value="1"/>
</dbReference>
<dbReference type="SMART" id="SM00889">
    <property type="entry name" value="EFG_IV"/>
    <property type="match status" value="1"/>
</dbReference>
<dbReference type="SUPFAM" id="SSF54980">
    <property type="entry name" value="EF-G C-terminal domain-like"/>
    <property type="match status" value="2"/>
</dbReference>
<dbReference type="SUPFAM" id="SSF52540">
    <property type="entry name" value="P-loop containing nucleoside triphosphate hydrolases"/>
    <property type="match status" value="1"/>
</dbReference>
<dbReference type="SUPFAM" id="SSF54211">
    <property type="entry name" value="Ribosomal protein S5 domain 2-like"/>
    <property type="match status" value="1"/>
</dbReference>
<dbReference type="SUPFAM" id="SSF50447">
    <property type="entry name" value="Translation proteins"/>
    <property type="match status" value="1"/>
</dbReference>
<dbReference type="PROSITE" id="PS00301">
    <property type="entry name" value="G_TR_1"/>
    <property type="match status" value="1"/>
</dbReference>
<dbReference type="PROSITE" id="PS51722">
    <property type="entry name" value="G_TR_2"/>
    <property type="match status" value="1"/>
</dbReference>
<reference key="1">
    <citation type="journal article" date="2005" name="J. Bacteriol.">
        <title>Genomic sequence of an otitis media isolate of nontypeable Haemophilus influenzae: comparative study with H. influenzae serotype d, strain KW20.</title>
        <authorList>
            <person name="Harrison A."/>
            <person name="Dyer D.W."/>
            <person name="Gillaspy A."/>
            <person name="Ray W.C."/>
            <person name="Mungur R."/>
            <person name="Carson M.B."/>
            <person name="Zhong H."/>
            <person name="Gipson J."/>
            <person name="Gipson M."/>
            <person name="Johnson L.S."/>
            <person name="Lewis L."/>
            <person name="Bakaletz L.O."/>
            <person name="Munson R.S. Jr."/>
        </authorList>
    </citation>
    <scope>NUCLEOTIDE SEQUENCE [LARGE SCALE GENOMIC DNA]</scope>
    <source>
        <strain>86-028NP</strain>
    </source>
</reference>